<sequence length="352" mass="39446">MTIAVGRAPAERGWFDVLDDWLKRDRFVFVGWSGLLLFPCAYLALGGWLTGTSFVTSWYTHGIASSYLEGGNFLTVAVSTPADAFGHSLMLLWGPEAQGNFVRWCQLGGLWNFVALHGAFGLIGFMLRQFEIARLVGVRPYNAIAFSGPIAVFVSVFLMYPLGQSSWFFAPSFGVAAIFRFLLFLQGFHNWTLNPFHMMGVAGILGGALLCAIHGATVENTLFEDSEQSNTFRAFEPTQAEETYSMVTANRFWSQIFGIAFSNKRWLHFFMLFVPVTGLWMSSIGIVGLALNLRAYDFVSQELRAAEDPEFETFYTKNILLNEGIRAWMAPQDQPHEKFVFPEEVLPRGNAL</sequence>
<dbReference type="EC" id="1.10.3.9" evidence="1"/>
<dbReference type="EMBL" id="M20815">
    <property type="protein sequence ID" value="AAA27357.1"/>
    <property type="molecule type" value="Genomic_DNA"/>
</dbReference>
<dbReference type="EMBL" id="M20814">
    <property type="protein sequence ID" value="AAA27358.1"/>
    <property type="molecule type" value="Genomic_DNA"/>
</dbReference>
<dbReference type="EMBL" id="CP000100">
    <property type="protein sequence ID" value="ABB56687.1"/>
    <property type="molecule type" value="Genomic_DNA"/>
</dbReference>
<dbReference type="EMBL" id="CP000100">
    <property type="protein sequence ID" value="ABB57667.1"/>
    <property type="molecule type" value="Genomic_DNA"/>
</dbReference>
<dbReference type="PIR" id="JT0321">
    <property type="entry name" value="JT0321"/>
</dbReference>
<dbReference type="SMR" id="P11005"/>
<dbReference type="STRING" id="1140.Synpcc7942_0655"/>
<dbReference type="TCDB" id="3.E.2.2.1">
    <property type="family name" value="the photosynthetic reaction center (prc) family"/>
</dbReference>
<dbReference type="PaxDb" id="1140-Synpcc7942_0655"/>
<dbReference type="KEGG" id="syf:Synpcc7942_0655"/>
<dbReference type="KEGG" id="syf:Synpcc7942_1637"/>
<dbReference type="eggNOG" id="ENOG502Z8JK">
    <property type="taxonomic scope" value="Bacteria"/>
</dbReference>
<dbReference type="HOGENOM" id="CLU_077965_0_0_3"/>
<dbReference type="OrthoDB" id="505356at2"/>
<dbReference type="BioCyc" id="MetaCyc:SYNPCC7942_0655-MONOMER"/>
<dbReference type="BioCyc" id="MetaCyc:SYNPCC7942_1637-MONOMER"/>
<dbReference type="BioCyc" id="SYNEL:SYNPCC7942_0655-MONOMER"/>
<dbReference type="BioCyc" id="SYNEL:SYNPCC7942_1637-MONOMER"/>
<dbReference type="Proteomes" id="UP000889800">
    <property type="component" value="Chromosome"/>
</dbReference>
<dbReference type="GO" id="GO:0009523">
    <property type="term" value="C:photosystem II"/>
    <property type="evidence" value="ECO:0007669"/>
    <property type="project" value="UniProtKB-KW"/>
</dbReference>
<dbReference type="GO" id="GO:0031676">
    <property type="term" value="C:plasma membrane-derived thylakoid membrane"/>
    <property type="evidence" value="ECO:0007669"/>
    <property type="project" value="UniProtKB-SubCell"/>
</dbReference>
<dbReference type="GO" id="GO:0016168">
    <property type="term" value="F:chlorophyll binding"/>
    <property type="evidence" value="ECO:0007669"/>
    <property type="project" value="UniProtKB-UniRule"/>
</dbReference>
<dbReference type="GO" id="GO:0045156">
    <property type="term" value="F:electron transporter, transferring electrons within the cyclic electron transport pathway of photosynthesis activity"/>
    <property type="evidence" value="ECO:0007669"/>
    <property type="project" value="InterPro"/>
</dbReference>
<dbReference type="GO" id="GO:0005506">
    <property type="term" value="F:iron ion binding"/>
    <property type="evidence" value="ECO:0007669"/>
    <property type="project" value="UniProtKB-UniRule"/>
</dbReference>
<dbReference type="GO" id="GO:0010242">
    <property type="term" value="F:oxygen evolving activity"/>
    <property type="evidence" value="ECO:0007669"/>
    <property type="project" value="UniProtKB-EC"/>
</dbReference>
<dbReference type="GO" id="GO:0009772">
    <property type="term" value="P:photosynthetic electron transport in photosystem II"/>
    <property type="evidence" value="ECO:0007669"/>
    <property type="project" value="InterPro"/>
</dbReference>
<dbReference type="FunFam" id="1.20.85.10:FF:000001">
    <property type="entry name" value="photosystem II D2 protein-like"/>
    <property type="match status" value="1"/>
</dbReference>
<dbReference type="Gene3D" id="1.20.85.10">
    <property type="entry name" value="Photosystem II protein D1-like"/>
    <property type="match status" value="1"/>
</dbReference>
<dbReference type="HAMAP" id="MF_01383">
    <property type="entry name" value="PSII_PsbD_D2"/>
    <property type="match status" value="1"/>
</dbReference>
<dbReference type="InterPro" id="IPR055266">
    <property type="entry name" value="D1/D2"/>
</dbReference>
<dbReference type="InterPro" id="IPR036854">
    <property type="entry name" value="Photo_II_D1/D2_sf"/>
</dbReference>
<dbReference type="InterPro" id="IPR000484">
    <property type="entry name" value="Photo_RC_L/M"/>
</dbReference>
<dbReference type="InterPro" id="IPR055265">
    <property type="entry name" value="Photo_RC_L/M_CS"/>
</dbReference>
<dbReference type="InterPro" id="IPR005868">
    <property type="entry name" value="PSII_PsbD/D2"/>
</dbReference>
<dbReference type="NCBIfam" id="TIGR01152">
    <property type="entry name" value="psbD"/>
    <property type="match status" value="1"/>
</dbReference>
<dbReference type="PANTHER" id="PTHR33149:SF12">
    <property type="entry name" value="PHOTOSYSTEM II D2 PROTEIN"/>
    <property type="match status" value="1"/>
</dbReference>
<dbReference type="PANTHER" id="PTHR33149">
    <property type="entry name" value="PHOTOSYSTEM II PROTEIN D1"/>
    <property type="match status" value="1"/>
</dbReference>
<dbReference type="Pfam" id="PF00124">
    <property type="entry name" value="Photo_RC"/>
    <property type="match status" value="1"/>
</dbReference>
<dbReference type="PRINTS" id="PR00256">
    <property type="entry name" value="REACTNCENTRE"/>
</dbReference>
<dbReference type="SUPFAM" id="SSF81483">
    <property type="entry name" value="Bacterial photosystem II reaction centre, L and M subunits"/>
    <property type="match status" value="1"/>
</dbReference>
<dbReference type="PROSITE" id="PS00244">
    <property type="entry name" value="REACTION_CENTER"/>
    <property type="match status" value="1"/>
</dbReference>
<accession>P11005</accession>
<accession>Q31MQ2</accession>
<evidence type="ECO:0000255" key="1">
    <source>
        <dbReference type="HAMAP-Rule" id="MF_01383"/>
    </source>
</evidence>
<evidence type="ECO:0000305" key="2"/>
<comment type="function">
    <text evidence="1">Photosystem II (PSII) is a light-driven water:plastoquinone oxidoreductase that uses light energy to abstract electrons from H(2)O, generating O(2) and a proton gradient subsequently used for ATP formation. It consists of a core antenna complex that captures photons, and an electron transfer chain that converts photonic excitation into a charge separation. The D1/D2 (PsbA/PsbD) reaction center heterodimer binds P680, the primary electron donor of PSII as well as several subsequent electron acceptors. D2 is needed for assembly of a stable PSII complex.</text>
</comment>
<comment type="catalytic activity">
    <reaction evidence="1">
        <text>2 a plastoquinone + 4 hnu + 2 H2O = 2 a plastoquinol + O2</text>
        <dbReference type="Rhea" id="RHEA:36359"/>
        <dbReference type="Rhea" id="RHEA-COMP:9561"/>
        <dbReference type="Rhea" id="RHEA-COMP:9562"/>
        <dbReference type="ChEBI" id="CHEBI:15377"/>
        <dbReference type="ChEBI" id="CHEBI:15379"/>
        <dbReference type="ChEBI" id="CHEBI:17757"/>
        <dbReference type="ChEBI" id="CHEBI:30212"/>
        <dbReference type="ChEBI" id="CHEBI:62192"/>
        <dbReference type="EC" id="1.10.3.9"/>
    </reaction>
</comment>
<comment type="cofactor">
    <text evidence="1">The D1/D2 heterodimer binds P680, chlorophylls that are the primary electron donor of PSII, and subsequent electron acceptors. It shares a non-heme iron and each subunit binds pheophytin, quinone, additional chlorophylls, carotenoids and lipids. There is also a Cl(-1) ion associated with D1 and D2, which is required for oxygen evolution. The PSII complex binds additional chlorophylls, carotenoids and specific lipids.</text>
</comment>
<comment type="subunit">
    <text evidence="1">PSII is composed of 1 copy each of membrane proteins PsbA, PsbB, PsbC, PsbD, PsbE, PsbF, PsbH, PsbI, PsbJ, PsbK, PsbL, PsbM, PsbT, PsbX, PsbY, PsbZ, Psb30/Ycf12, peripheral proteins PsbO, CyanoQ (PsbQ), PsbU, PsbV and a large number of cofactors. It forms dimeric complexes.</text>
</comment>
<comment type="subcellular location">
    <subcellularLocation>
        <location evidence="1">Cellular thylakoid membrane</location>
        <topology evidence="1">Multi-pass membrane protein</topology>
    </subcellularLocation>
</comment>
<comment type="miscellaneous">
    <text evidence="1">2 of the reaction center chlorophylls (ChlD1 and ChlD2) are entirely coordinated by water.</text>
</comment>
<comment type="similarity">
    <text evidence="1">Belongs to the reaction center PufL/M/PsbA/D family.</text>
</comment>
<reference key="1">
    <citation type="journal article" date="1988" name="Gene">
        <title>Nucleotide sequence and transcript analysis of three photosystem II genes from the cyanobacterium Synechococcus sp. PCC7942.</title>
        <authorList>
            <person name="Golden S.S."/>
            <person name="Stearns G.W."/>
        </authorList>
    </citation>
    <scope>NUCLEOTIDE SEQUENCE [GENOMIC DNA]</scope>
</reference>
<reference key="2">
    <citation type="submission" date="2005-08" db="EMBL/GenBank/DDBJ databases">
        <title>Complete sequence of chromosome 1 of Synechococcus elongatus PCC 7942.</title>
        <authorList>
            <consortium name="US DOE Joint Genome Institute"/>
            <person name="Copeland A."/>
            <person name="Lucas S."/>
            <person name="Lapidus A."/>
            <person name="Barry K."/>
            <person name="Detter J.C."/>
            <person name="Glavina T."/>
            <person name="Hammon N."/>
            <person name="Israni S."/>
            <person name="Pitluck S."/>
            <person name="Schmutz J."/>
            <person name="Larimer F."/>
            <person name="Land M."/>
            <person name="Kyrpides N."/>
            <person name="Lykidis A."/>
            <person name="Golden S."/>
            <person name="Richardson P."/>
        </authorList>
    </citation>
    <scope>NUCLEOTIDE SEQUENCE [LARGE SCALE GENOMIC DNA]</scope>
    <source>
        <strain>ATCC 33912 / PCC 7942 / FACHB-805</strain>
    </source>
</reference>
<name>PSBD_SYNE7</name>
<keyword id="KW-0148">Chlorophyll</keyword>
<keyword id="KW-0157">Chromophore</keyword>
<keyword id="KW-0249">Electron transport</keyword>
<keyword id="KW-0408">Iron</keyword>
<keyword id="KW-0460">Magnesium</keyword>
<keyword id="KW-0472">Membrane</keyword>
<keyword id="KW-0479">Metal-binding</keyword>
<keyword id="KW-0560">Oxidoreductase</keyword>
<keyword id="KW-0602">Photosynthesis</keyword>
<keyword id="KW-0604">Photosystem II</keyword>
<keyword id="KW-1185">Reference proteome</keyword>
<keyword id="KW-0793">Thylakoid</keyword>
<keyword id="KW-0812">Transmembrane</keyword>
<keyword id="KW-1133">Transmembrane helix</keyword>
<keyword id="KW-0813">Transport</keyword>
<organism>
    <name type="scientific">Synechococcus elongatus (strain ATCC 33912 / PCC 7942 / FACHB-805)</name>
    <name type="common">Anacystis nidulans R2</name>
    <dbReference type="NCBI Taxonomy" id="1140"/>
    <lineage>
        <taxon>Bacteria</taxon>
        <taxon>Bacillati</taxon>
        <taxon>Cyanobacteriota</taxon>
        <taxon>Cyanophyceae</taxon>
        <taxon>Synechococcales</taxon>
        <taxon>Synechococcaceae</taxon>
        <taxon>Synechococcus</taxon>
    </lineage>
</organism>
<feature type="chain" id="PRO_0000090526" description="Photosystem II D2 protein">
    <location>
        <begin position="1"/>
        <end position="352"/>
    </location>
</feature>
<feature type="transmembrane region" description="Helical" evidence="1">
    <location>
        <begin position="40"/>
        <end position="60"/>
    </location>
</feature>
<feature type="transmembrane region" description="Helical" evidence="1">
    <location>
        <begin position="124"/>
        <end position="140"/>
    </location>
</feature>
<feature type="transmembrane region" description="Helical" evidence="1">
    <location>
        <begin position="152"/>
        <end position="165"/>
    </location>
</feature>
<feature type="transmembrane region" description="Helical" evidence="1">
    <location>
        <begin position="207"/>
        <end position="227"/>
    </location>
</feature>
<feature type="transmembrane region" description="Helical" evidence="1">
    <location>
        <begin position="278"/>
        <end position="294"/>
    </location>
</feature>
<feature type="binding site" description="axial binding residue" evidence="1">
    <location>
        <position position="117"/>
    </location>
    <ligand>
        <name>chlorophyll a</name>
        <dbReference type="ChEBI" id="CHEBI:58416"/>
        <label>ChlzD2</label>
    </ligand>
    <ligandPart>
        <name>Mg</name>
        <dbReference type="ChEBI" id="CHEBI:25107"/>
    </ligandPart>
</feature>
<feature type="binding site" evidence="1">
    <location>
        <position position="129"/>
    </location>
    <ligand>
        <name>pheophytin a</name>
        <dbReference type="ChEBI" id="CHEBI:136840"/>
        <label>D2</label>
    </ligand>
</feature>
<feature type="binding site" evidence="1">
    <location>
        <position position="142"/>
    </location>
    <ligand>
        <name>pheophytin a</name>
        <dbReference type="ChEBI" id="CHEBI:136840"/>
        <label>D2</label>
    </ligand>
</feature>
<feature type="binding site" description="axial binding residue" evidence="1">
    <location>
        <position position="197"/>
    </location>
    <ligand>
        <name>chlorophyll a</name>
        <dbReference type="ChEBI" id="CHEBI:58416"/>
        <label>PD2</label>
    </ligand>
    <ligandPart>
        <name>Mg</name>
        <dbReference type="ChEBI" id="CHEBI:25107"/>
    </ligandPart>
</feature>
<feature type="binding site" evidence="1">
    <location>
        <position position="214"/>
    </location>
    <ligand>
        <name>a plastoquinone</name>
        <dbReference type="ChEBI" id="CHEBI:17757"/>
        <label>Q(A)</label>
    </ligand>
</feature>
<feature type="binding site" evidence="1">
    <location>
        <position position="214"/>
    </location>
    <ligand>
        <name>Fe cation</name>
        <dbReference type="ChEBI" id="CHEBI:24875"/>
        <note>ligand shared with heterodimeric partner</note>
    </ligand>
</feature>
<feature type="binding site" evidence="1">
    <location>
        <position position="261"/>
    </location>
    <ligand>
        <name>a plastoquinone</name>
        <dbReference type="ChEBI" id="CHEBI:17757"/>
        <label>Q(A)</label>
    </ligand>
</feature>
<feature type="binding site" evidence="1">
    <location>
        <position position="268"/>
    </location>
    <ligand>
        <name>Fe cation</name>
        <dbReference type="ChEBI" id="CHEBI:24875"/>
        <note>ligand shared with heterodimeric partner</note>
    </ligand>
</feature>
<feature type="sequence conflict" description="In Ref. 1; AAA27357/AAA27358." evidence="2" ref="1">
    <original>G</original>
    <variation>A</variation>
    <location>
        <position position="121"/>
    </location>
</feature>
<proteinExistence type="inferred from homology"/>
<protein>
    <recommendedName>
        <fullName evidence="1">Photosystem II D2 protein</fullName>
        <shortName evidence="1">PSII D2 protein</shortName>
        <ecNumber evidence="1">1.10.3.9</ecNumber>
    </recommendedName>
    <alternativeName>
        <fullName evidence="1">Photosystem Q(A) protein</fullName>
    </alternativeName>
</protein>
<gene>
    <name evidence="1" type="primary">psbD1</name>
    <name type="ordered locus">Synpcc7942_0655</name>
</gene>
<gene>
    <name evidence="1" type="primary">psbD2</name>
    <name type="ordered locus">Synpcc7942_1637</name>
</gene>